<proteinExistence type="inferred from homology"/>
<dbReference type="EMBL" id="CP000246">
    <property type="protein sequence ID" value="ABG84940.1"/>
    <property type="molecule type" value="Genomic_DNA"/>
</dbReference>
<dbReference type="SMR" id="Q0TMS4"/>
<dbReference type="STRING" id="195103.CPF_2686"/>
<dbReference type="PaxDb" id="195103-CPF_2686"/>
<dbReference type="KEGG" id="cpf:CPF_2686"/>
<dbReference type="eggNOG" id="COG0522">
    <property type="taxonomic scope" value="Bacteria"/>
</dbReference>
<dbReference type="HOGENOM" id="CLU_092403_0_2_9"/>
<dbReference type="Proteomes" id="UP000001823">
    <property type="component" value="Chromosome"/>
</dbReference>
<dbReference type="GO" id="GO:0015935">
    <property type="term" value="C:small ribosomal subunit"/>
    <property type="evidence" value="ECO:0007669"/>
    <property type="project" value="InterPro"/>
</dbReference>
<dbReference type="GO" id="GO:0019843">
    <property type="term" value="F:rRNA binding"/>
    <property type="evidence" value="ECO:0007669"/>
    <property type="project" value="UniProtKB-UniRule"/>
</dbReference>
<dbReference type="GO" id="GO:0003735">
    <property type="term" value="F:structural constituent of ribosome"/>
    <property type="evidence" value="ECO:0007669"/>
    <property type="project" value="InterPro"/>
</dbReference>
<dbReference type="GO" id="GO:0042274">
    <property type="term" value="P:ribosomal small subunit biogenesis"/>
    <property type="evidence" value="ECO:0007669"/>
    <property type="project" value="TreeGrafter"/>
</dbReference>
<dbReference type="GO" id="GO:0006412">
    <property type="term" value="P:translation"/>
    <property type="evidence" value="ECO:0007669"/>
    <property type="project" value="UniProtKB-UniRule"/>
</dbReference>
<dbReference type="CDD" id="cd00165">
    <property type="entry name" value="S4"/>
    <property type="match status" value="1"/>
</dbReference>
<dbReference type="FunFam" id="1.10.1050.10:FF:000001">
    <property type="entry name" value="30S ribosomal protein S4"/>
    <property type="match status" value="1"/>
</dbReference>
<dbReference type="FunFam" id="3.10.290.10:FF:000001">
    <property type="entry name" value="30S ribosomal protein S4"/>
    <property type="match status" value="1"/>
</dbReference>
<dbReference type="Gene3D" id="1.10.1050.10">
    <property type="entry name" value="Ribosomal Protein S4 Delta 41, Chain A, domain 1"/>
    <property type="match status" value="1"/>
</dbReference>
<dbReference type="Gene3D" id="3.10.290.10">
    <property type="entry name" value="RNA-binding S4 domain"/>
    <property type="match status" value="1"/>
</dbReference>
<dbReference type="HAMAP" id="MF_01306_B">
    <property type="entry name" value="Ribosomal_uS4_B"/>
    <property type="match status" value="1"/>
</dbReference>
<dbReference type="InterPro" id="IPR022801">
    <property type="entry name" value="Ribosomal_uS4"/>
</dbReference>
<dbReference type="InterPro" id="IPR005709">
    <property type="entry name" value="Ribosomal_uS4_bac-type"/>
</dbReference>
<dbReference type="InterPro" id="IPR018079">
    <property type="entry name" value="Ribosomal_uS4_CS"/>
</dbReference>
<dbReference type="InterPro" id="IPR001912">
    <property type="entry name" value="Ribosomal_uS4_N"/>
</dbReference>
<dbReference type="InterPro" id="IPR002942">
    <property type="entry name" value="S4_RNA-bd"/>
</dbReference>
<dbReference type="InterPro" id="IPR036986">
    <property type="entry name" value="S4_RNA-bd_sf"/>
</dbReference>
<dbReference type="NCBIfam" id="NF003717">
    <property type="entry name" value="PRK05327.1"/>
    <property type="match status" value="1"/>
</dbReference>
<dbReference type="NCBIfam" id="TIGR01017">
    <property type="entry name" value="rpsD_bact"/>
    <property type="match status" value="1"/>
</dbReference>
<dbReference type="PANTHER" id="PTHR11831">
    <property type="entry name" value="30S 40S RIBOSOMAL PROTEIN"/>
    <property type="match status" value="1"/>
</dbReference>
<dbReference type="PANTHER" id="PTHR11831:SF4">
    <property type="entry name" value="SMALL RIBOSOMAL SUBUNIT PROTEIN US4M"/>
    <property type="match status" value="1"/>
</dbReference>
<dbReference type="Pfam" id="PF00163">
    <property type="entry name" value="Ribosomal_S4"/>
    <property type="match status" value="1"/>
</dbReference>
<dbReference type="Pfam" id="PF01479">
    <property type="entry name" value="S4"/>
    <property type="match status" value="1"/>
</dbReference>
<dbReference type="SMART" id="SM01390">
    <property type="entry name" value="Ribosomal_S4"/>
    <property type="match status" value="1"/>
</dbReference>
<dbReference type="SMART" id="SM00363">
    <property type="entry name" value="S4"/>
    <property type="match status" value="1"/>
</dbReference>
<dbReference type="SUPFAM" id="SSF55174">
    <property type="entry name" value="Alpha-L RNA-binding motif"/>
    <property type="match status" value="1"/>
</dbReference>
<dbReference type="PROSITE" id="PS00632">
    <property type="entry name" value="RIBOSOMAL_S4"/>
    <property type="match status" value="1"/>
</dbReference>
<dbReference type="PROSITE" id="PS50889">
    <property type="entry name" value="S4"/>
    <property type="match status" value="1"/>
</dbReference>
<evidence type="ECO:0000255" key="1">
    <source>
        <dbReference type="HAMAP-Rule" id="MF_01306"/>
    </source>
</evidence>
<evidence type="ECO:0000305" key="2"/>
<protein>
    <recommendedName>
        <fullName evidence="1">Small ribosomal subunit protein uS4A</fullName>
    </recommendedName>
    <alternativeName>
        <fullName evidence="2">30S ribosomal protein S4 1</fullName>
    </alternativeName>
</protein>
<gene>
    <name evidence="1" type="primary">rpsD1</name>
    <name type="ordered locus">CPF_2686</name>
</gene>
<sequence>MARYTGATCKLCRREGMKLFLKGDRCYTDKCAFVRRSYAPGQHGASRKKLSNYGTQLREKQKAKRIYGVLEGQFRNTYERAEKMRGIAGENLLKLLEMRLDNVVYRLGYGASRTEARQLVNHGHFLVNGKKVDIASFKVSVNDVITVCEKSRGSERFKMFAENPKALPKWLEANVENFEGKVVAEPAREDIDVPVNETLIVELYSK</sequence>
<accession>Q0TMS4</accession>
<feature type="chain" id="PRO_0000293264" description="Small ribosomal subunit protein uS4A">
    <location>
        <begin position="1"/>
        <end position="206"/>
    </location>
</feature>
<feature type="domain" description="S4 RNA-binding" evidence="1">
    <location>
        <begin position="98"/>
        <end position="163"/>
    </location>
</feature>
<organism>
    <name type="scientific">Clostridium perfringens (strain ATCC 13124 / DSM 756 / JCM 1290 / NCIMB 6125 / NCTC 8237 / Type A)</name>
    <dbReference type="NCBI Taxonomy" id="195103"/>
    <lineage>
        <taxon>Bacteria</taxon>
        <taxon>Bacillati</taxon>
        <taxon>Bacillota</taxon>
        <taxon>Clostridia</taxon>
        <taxon>Eubacteriales</taxon>
        <taxon>Clostridiaceae</taxon>
        <taxon>Clostridium</taxon>
    </lineage>
</organism>
<comment type="function">
    <text evidence="1">One of the primary rRNA binding proteins, it binds directly to 16S rRNA where it nucleates assembly of the body of the 30S subunit.</text>
</comment>
<comment type="function">
    <text evidence="1">With S5 and S12 plays an important role in translational accuracy.</text>
</comment>
<comment type="subunit">
    <text evidence="1">Part of the 30S ribosomal subunit. Contacts protein S5. The interaction surface between S4 and S5 is involved in control of translational fidelity.</text>
</comment>
<comment type="similarity">
    <text evidence="1">Belongs to the universal ribosomal protein uS4 family.</text>
</comment>
<name>RS4A_CLOP1</name>
<keyword id="KW-0687">Ribonucleoprotein</keyword>
<keyword id="KW-0689">Ribosomal protein</keyword>
<keyword id="KW-0694">RNA-binding</keyword>
<keyword id="KW-0699">rRNA-binding</keyword>
<reference key="1">
    <citation type="journal article" date="2006" name="Genome Res.">
        <title>Skewed genomic variability in strains of the toxigenic bacterial pathogen, Clostridium perfringens.</title>
        <authorList>
            <person name="Myers G.S.A."/>
            <person name="Rasko D.A."/>
            <person name="Cheung J.K."/>
            <person name="Ravel J."/>
            <person name="Seshadri R."/>
            <person name="DeBoy R.T."/>
            <person name="Ren Q."/>
            <person name="Varga J."/>
            <person name="Awad M.M."/>
            <person name="Brinkac L.M."/>
            <person name="Daugherty S.C."/>
            <person name="Haft D.H."/>
            <person name="Dodson R.J."/>
            <person name="Madupu R."/>
            <person name="Nelson W.C."/>
            <person name="Rosovitz M.J."/>
            <person name="Sullivan S.A."/>
            <person name="Khouri H."/>
            <person name="Dimitrov G.I."/>
            <person name="Watkins K.L."/>
            <person name="Mulligan S."/>
            <person name="Benton J."/>
            <person name="Radune D."/>
            <person name="Fisher D.J."/>
            <person name="Atkins H.S."/>
            <person name="Hiscox T."/>
            <person name="Jost B.H."/>
            <person name="Billington S.J."/>
            <person name="Songer J.G."/>
            <person name="McClane B.A."/>
            <person name="Titball R.W."/>
            <person name="Rood J.I."/>
            <person name="Melville S.B."/>
            <person name="Paulsen I.T."/>
        </authorList>
    </citation>
    <scope>NUCLEOTIDE SEQUENCE [LARGE SCALE GENOMIC DNA]</scope>
    <source>
        <strain>ATCC 13124 / DSM 756 / JCM 1290 / NCIMB 6125 / NCTC 8237 / S 107 / Type A</strain>
    </source>
</reference>